<dbReference type="EMBL" id="AY243312">
    <property type="protein sequence ID" value="AAO89330.1"/>
    <property type="molecule type" value="Genomic_DNA"/>
</dbReference>
<dbReference type="RefSeq" id="YP_232933.1">
    <property type="nucleotide sequence ID" value="NC_006998.1"/>
</dbReference>
<dbReference type="ELM" id="Q80HX6"/>
<dbReference type="DNASU" id="3707508"/>
<dbReference type="GeneID" id="3707508"/>
<dbReference type="KEGG" id="vg:3707508"/>
<dbReference type="Proteomes" id="UP000000344">
    <property type="component" value="Genome"/>
</dbReference>
<dbReference type="GO" id="GO:0043657">
    <property type="term" value="C:host cell"/>
    <property type="evidence" value="ECO:0007669"/>
    <property type="project" value="GOC"/>
</dbReference>
<dbReference type="GO" id="GO:0044174">
    <property type="term" value="C:host cell endosome"/>
    <property type="evidence" value="ECO:0007669"/>
    <property type="project" value="UniProtKB-SubCell"/>
</dbReference>
<dbReference type="GO" id="GO:0016020">
    <property type="term" value="C:membrane"/>
    <property type="evidence" value="ECO:0007669"/>
    <property type="project" value="UniProtKB-KW"/>
</dbReference>
<dbReference type="GO" id="GO:0055036">
    <property type="term" value="C:virion membrane"/>
    <property type="evidence" value="ECO:0007669"/>
    <property type="project" value="UniProtKB-SubCell"/>
</dbReference>
<dbReference type="GO" id="GO:0039701">
    <property type="term" value="P:microtubule-dependent intracellular transport of viral material towards cell periphery"/>
    <property type="evidence" value="ECO:0000314"/>
    <property type="project" value="UniProtKB"/>
</dbReference>
<dbReference type="InterPro" id="IPR005005">
    <property type="entry name" value="Poxvirus_F12L"/>
</dbReference>
<dbReference type="InterPro" id="IPR012337">
    <property type="entry name" value="RNaseH-like_sf"/>
</dbReference>
<dbReference type="Pfam" id="PF03337">
    <property type="entry name" value="Pox_F12L"/>
    <property type="match status" value="1"/>
</dbReference>
<dbReference type="PIRSF" id="PIRSF015793">
    <property type="entry name" value="VAC_EEV"/>
    <property type="match status" value="1"/>
</dbReference>
<dbReference type="SUPFAM" id="SSF53098">
    <property type="entry name" value="Ribonuclease H-like"/>
    <property type="match status" value="1"/>
</dbReference>
<organism>
    <name type="scientific">Vaccinia virus (strain Western Reserve)</name>
    <name type="common">VACV</name>
    <name type="synonym">Vaccinia virus (strain WR)</name>
    <dbReference type="NCBI Taxonomy" id="10254"/>
    <lineage>
        <taxon>Viruses</taxon>
        <taxon>Varidnaviria</taxon>
        <taxon>Bamfordvirae</taxon>
        <taxon>Nucleocytoviricota</taxon>
        <taxon>Pokkesviricetes</taxon>
        <taxon>Chitovirales</taxon>
        <taxon>Poxviridae</taxon>
        <taxon>Chordopoxvirinae</taxon>
        <taxon>Orthopoxvirus</taxon>
        <taxon>Vaccinia virus</taxon>
    </lineage>
</organism>
<gene>
    <name type="primary">OPG056</name>
    <name type="ordered locus">VACWR051</name>
    <name type="ORF">F12L</name>
</gene>
<protein>
    <recommendedName>
        <fullName>Protein OPG056</fullName>
    </recommendedName>
    <alternativeName>
        <fullName>Protein F12</fullName>
    </alternativeName>
</protein>
<name>PG056_VACCW</name>
<keyword id="KW-0244">Early protein</keyword>
<keyword id="KW-1039">Host endosome</keyword>
<keyword id="KW-0945">Host-virus interaction</keyword>
<keyword id="KW-0472">Membrane</keyword>
<keyword id="KW-1189">Microtubular outwards viral transport</keyword>
<keyword id="KW-1185">Reference proteome</keyword>
<keyword id="KW-1188">Viral release from host cell</keyword>
<keyword id="KW-0946">Virion</keyword>
<keyword id="KW-0843">Virulence</keyword>
<evidence type="ECO:0000269" key="1">
    <source>
    </source>
</evidence>
<evidence type="ECO:0000269" key="2">
    <source>
    </source>
</evidence>
<evidence type="ECO:0000269" key="3">
    <source>
    </source>
</evidence>
<evidence type="ECO:0000269" key="4">
    <source>
    </source>
</evidence>
<evidence type="ECO:0000269" key="5">
    <source>
    </source>
</evidence>
<evidence type="ECO:0000269" key="6">
    <source>
    </source>
</evidence>
<evidence type="ECO:0000305" key="7"/>
<sequence length="635" mass="73217">MLNRVQILMKTANNYETIEILRNYLRLYIILARNEEGRGILIYDDNIDSIMSMMNITRLEVIGLTTHCTKLRSSPPIPMSRLFMDEIDHESYYSPKTSDYPLIDIIRKRSHEQGDIALALEQYGIENTDSISEINEWLSSKGLACYRFVKFNDYRKQMYRKFSRCTIVDSMIIGHIGHHYIWIKNLETYTRPEIDVLPFDIKYISRDELWARISSSLDQTHIKTIAVSVYGAITDNGPMPYMISTYPGNTFVNFNSVKNLILNFLDWIKDIMTSTRTIILVGYMSNLFDIPLLTVYWPNNCGWKIYNNTLISSDGARVIWMDAYKFSCGLSLQDYCYHWGSKPESRPFDLIKKSDAKRNSKSLVKESMASLKSLYEAFETQSGALEVLMSPCRMFSFSRIEDMFLTSVINRVSENTGMGMYYPTNDIPSLFIESSICLDYIIVNNQESNKYRIKSVLDIISSKQYPAGRPNYVKNGTKGKLYIALCKVTVPTNDHIPVVYHDDDNTTTFITVLTSVDIETAIRAGYSIVELGALQWDDNIPELKHGLLDSIKMIYDLNAVTTNNLLEQLIENINFNNSSIISLFYTFAISYCRAFIYSIMETIDPVYISQFSYKELYVSSSYKDINESMSQMVKL</sequence>
<comment type="function">
    <text evidence="1 2 3 4 5">Plays a role in intracellular enveloped virus (IEV) transport to the cell surface through microtubule transport. Together with protein OPG064/E2, forms a complex that interacts with host KLC2 (kinesin light chain isoform 2) to engage the kinesin-1 complex and thereby promote IEV trafficking.</text>
</comment>
<comment type="subunit">
    <text evidence="4 5">Interacts with protein OPG164/A36. Interacts with protein OPG064/E2.</text>
</comment>
<comment type="subcellular location">
    <subcellularLocation>
        <location>Virion membrane</location>
    </subcellularLocation>
    <subcellularLocation>
        <location>Host endosome</location>
    </subcellularLocation>
    <text evidence="5">Associates with the membrane of IEV particles, but not intracellular mature virus (IMV), cell-associated enveloped virus (CEV) or EEV. Colocalizes with microtubules.</text>
</comment>
<comment type="induction">
    <text evidence="6">Expressed in the early phase of the viral replicative cycle.</text>
</comment>
<comment type="similarity">
    <text evidence="7">Belongs to the orthopoxvirus OPG056 family.</text>
</comment>
<reference key="1">
    <citation type="submission" date="2003-02" db="EMBL/GenBank/DDBJ databases">
        <title>Sequencing of the coding region of Vaccinia-WR to an average 9-fold redundancy and an error rate of 0.16/10kb.</title>
        <authorList>
            <person name="Esposito J.J."/>
            <person name="Frace A.M."/>
            <person name="Sammons S.A."/>
            <person name="Olsen-Rasmussen M."/>
            <person name="Osborne J."/>
            <person name="Wohlhueter R."/>
        </authorList>
    </citation>
    <scope>NUCLEOTIDE SEQUENCE [LARGE SCALE GENOMIC DNA]</scope>
</reference>
<reference key="2">
    <citation type="journal article" date="2000" name="J. Virol.">
        <title>Vaccinia virus F12L protein is required for actin tail formation, normal plaque size, and virulence.</title>
        <authorList>
            <person name="Zhang W.H."/>
            <person name="Wilcock D."/>
            <person name="Smith G.L."/>
        </authorList>
    </citation>
    <scope>FUNCTION</scope>
    <scope>LACK OF GLYCOSYLATION</scope>
</reference>
<reference key="3">
    <citation type="journal article" date="2002" name="J. Gen. Virol.">
        <title>The vaccinia virus F12L protein is associated with intracellular enveloped virus particles and is required for their egress to the cell surface.</title>
        <authorList>
            <person name="van Eijl H."/>
            <person name="Hollinshead M."/>
            <person name="Rodger G."/>
            <person name="Zhang W.-H."/>
            <person name="Smith G.L."/>
        </authorList>
    </citation>
    <scope>FUNCTION</scope>
    <scope>SUBCELLULAR LOCATION</scope>
</reference>
<reference key="4">
    <citation type="journal article" date="2005" name="J. Gen. Virol.">
        <title>Vaccinia virus intracellular enveloped virions move to the cell periphery on microtubules in the absence of the A36R protein.</title>
        <authorList>
            <person name="Herrero-Martinez E."/>
            <person name="Roberts K.L."/>
            <person name="Hollinshead M."/>
            <person name="Smith G.L."/>
        </authorList>
    </citation>
    <scope>FUNCTION</scope>
    <scope>SUBCELLULAR LOCATION</scope>
</reference>
<reference key="5">
    <citation type="journal article" date="2009" name="Cell. Microbiol.">
        <title>An E2-F12 complex is required for intracellular enveloped virus morphogenesis during vaccinia infection.</title>
        <authorList>
            <person name="Dodding M.P."/>
            <person name="Newsome T.P."/>
            <person name="Collinson L.M."/>
            <person name="Edwards C."/>
            <person name="Way M."/>
        </authorList>
    </citation>
    <scope>INTERACTION WITH PROTEIN OPG064/E2</scope>
    <scope>FUNCTION</scope>
</reference>
<reference key="6">
    <citation type="journal article" date="2010" name="PLoS Pathog.">
        <title>Vaccinia protein F12 has structural similarity to kinesin light chain and contains a motor binding motif required for virion export.</title>
        <authorList>
            <person name="Morgan G.W."/>
            <person name="Hollinshead M."/>
            <person name="Ferguson B.J."/>
            <person name="Murphy B.J."/>
            <person name="Carpentier D.C."/>
            <person name="Smith G.L."/>
        </authorList>
    </citation>
    <scope>INTERACTION WITH PROTEIN OPG164/A36</scope>
    <scope>FUNCTION</scope>
    <scope>SUBCELLULAR LOCATION</scope>
</reference>
<reference key="7">
    <citation type="journal article" date="2015" name="PLoS Pathog.">
        <title>Vaccinia virus protein complex F12/E2 interacts with kinesin light chain isoform 2 to engage the kinesin-1 motor complex.</title>
        <authorList>
            <person name="Carpentier D.C."/>
            <person name="Gao W.N."/>
            <person name="Ewles H."/>
            <person name="Morgan G.W."/>
            <person name="Smith G.L."/>
        </authorList>
    </citation>
    <scope>FUNCTION</scope>
</reference>
<reference key="8">
    <citation type="journal article" date="2015" name="J. Virol.">
        <title>Deciphering poxvirus gene expression by RNA sequencing and ribosome profiling.</title>
        <authorList>
            <person name="Yang Z."/>
            <person name="Cao S."/>
            <person name="Martens C.A."/>
            <person name="Porcella S.F."/>
            <person name="Xie Z."/>
            <person name="Ma M."/>
            <person name="Shen B."/>
            <person name="Moss B."/>
        </authorList>
    </citation>
    <scope>INDUCTION</scope>
</reference>
<proteinExistence type="evidence at protein level"/>
<feature type="chain" id="PRO_0000343640" description="Protein OPG056">
    <location>
        <begin position="1"/>
        <end position="635"/>
    </location>
</feature>
<accession>Q80HX6</accession>
<organismHost>
    <name type="scientific">Bos taurus</name>
    <name type="common">Bovine</name>
    <dbReference type="NCBI Taxonomy" id="9913"/>
</organismHost>